<reference key="1">
    <citation type="journal article" date="2004" name="Proc. Natl. Acad. Sci. U.S.A.">
        <title>Genomic analysis of Bacteroides fragilis reveals extensive DNA inversions regulating cell surface adaptation.</title>
        <authorList>
            <person name="Kuwahara T."/>
            <person name="Yamashita A."/>
            <person name="Hirakawa H."/>
            <person name="Nakayama H."/>
            <person name="Toh H."/>
            <person name="Okada N."/>
            <person name="Kuhara S."/>
            <person name="Hattori M."/>
            <person name="Hayashi T."/>
            <person name="Ohnishi Y."/>
        </authorList>
    </citation>
    <scope>NUCLEOTIDE SEQUENCE [LARGE SCALE GENOMIC DNA]</scope>
    <source>
        <strain>YCH46</strain>
    </source>
</reference>
<gene>
    <name evidence="1" type="primary">nfo</name>
    <name type="ordered locus">BF1241</name>
</gene>
<proteinExistence type="inferred from homology"/>
<feature type="chain" id="PRO_1000011291" description="Probable endonuclease 4">
    <location>
        <begin position="1"/>
        <end position="278"/>
    </location>
</feature>
<feature type="binding site" evidence="1">
    <location>
        <position position="69"/>
    </location>
    <ligand>
        <name>Zn(2+)</name>
        <dbReference type="ChEBI" id="CHEBI:29105"/>
        <label>1</label>
    </ligand>
</feature>
<feature type="binding site" evidence="1">
    <location>
        <position position="109"/>
    </location>
    <ligand>
        <name>Zn(2+)</name>
        <dbReference type="ChEBI" id="CHEBI:29105"/>
        <label>1</label>
    </ligand>
</feature>
<feature type="binding site" evidence="1">
    <location>
        <position position="145"/>
    </location>
    <ligand>
        <name>Zn(2+)</name>
        <dbReference type="ChEBI" id="CHEBI:29105"/>
        <label>1</label>
    </ligand>
</feature>
<feature type="binding site" evidence="1">
    <location>
        <position position="145"/>
    </location>
    <ligand>
        <name>Zn(2+)</name>
        <dbReference type="ChEBI" id="CHEBI:29105"/>
        <label>2</label>
    </ligand>
</feature>
<feature type="binding site" evidence="1">
    <location>
        <position position="179"/>
    </location>
    <ligand>
        <name>Zn(2+)</name>
        <dbReference type="ChEBI" id="CHEBI:29105"/>
        <label>2</label>
    </ligand>
</feature>
<feature type="binding site" evidence="1">
    <location>
        <position position="182"/>
    </location>
    <ligand>
        <name>Zn(2+)</name>
        <dbReference type="ChEBI" id="CHEBI:29105"/>
        <label>3</label>
    </ligand>
</feature>
<feature type="binding site" evidence="1">
    <location>
        <position position="214"/>
    </location>
    <ligand>
        <name>Zn(2+)</name>
        <dbReference type="ChEBI" id="CHEBI:29105"/>
        <label>2</label>
    </ligand>
</feature>
<feature type="binding site" evidence="1">
    <location>
        <position position="227"/>
    </location>
    <ligand>
        <name>Zn(2+)</name>
        <dbReference type="ChEBI" id="CHEBI:29105"/>
        <label>3</label>
    </ligand>
</feature>
<feature type="binding site" evidence="1">
    <location>
        <position position="229"/>
    </location>
    <ligand>
        <name>Zn(2+)</name>
        <dbReference type="ChEBI" id="CHEBI:29105"/>
        <label>3</label>
    </ligand>
</feature>
<feature type="binding site" evidence="1">
    <location>
        <position position="259"/>
    </location>
    <ligand>
        <name>Zn(2+)</name>
        <dbReference type="ChEBI" id="CHEBI:29105"/>
        <label>2</label>
    </ligand>
</feature>
<evidence type="ECO:0000255" key="1">
    <source>
        <dbReference type="HAMAP-Rule" id="MF_00152"/>
    </source>
</evidence>
<organism>
    <name type="scientific">Bacteroides fragilis (strain YCH46)</name>
    <dbReference type="NCBI Taxonomy" id="295405"/>
    <lineage>
        <taxon>Bacteria</taxon>
        <taxon>Pseudomonadati</taxon>
        <taxon>Bacteroidota</taxon>
        <taxon>Bacteroidia</taxon>
        <taxon>Bacteroidales</taxon>
        <taxon>Bacteroidaceae</taxon>
        <taxon>Bacteroides</taxon>
    </lineage>
</organism>
<dbReference type="EC" id="3.1.21.2" evidence="1"/>
<dbReference type="EMBL" id="AP006841">
    <property type="protein sequence ID" value="BAD47991.1"/>
    <property type="molecule type" value="Genomic_DNA"/>
</dbReference>
<dbReference type="RefSeq" id="WP_005795638.1">
    <property type="nucleotide sequence ID" value="NC_006347.1"/>
</dbReference>
<dbReference type="RefSeq" id="YP_098525.1">
    <property type="nucleotide sequence ID" value="NC_006347.1"/>
</dbReference>
<dbReference type="SMR" id="Q64WY5"/>
<dbReference type="STRING" id="295405.BF1241"/>
<dbReference type="GeneID" id="60369169"/>
<dbReference type="KEGG" id="bfr:BF1241"/>
<dbReference type="PATRIC" id="fig|295405.11.peg.1228"/>
<dbReference type="HOGENOM" id="CLU_025885_0_4_10"/>
<dbReference type="OrthoDB" id="9805666at2"/>
<dbReference type="Proteomes" id="UP000002197">
    <property type="component" value="Chromosome"/>
</dbReference>
<dbReference type="GO" id="GO:0008833">
    <property type="term" value="F:deoxyribonuclease IV (phage-T4-induced) activity"/>
    <property type="evidence" value="ECO:0007669"/>
    <property type="project" value="UniProtKB-UniRule"/>
</dbReference>
<dbReference type="GO" id="GO:0003677">
    <property type="term" value="F:DNA binding"/>
    <property type="evidence" value="ECO:0007669"/>
    <property type="project" value="InterPro"/>
</dbReference>
<dbReference type="GO" id="GO:0003906">
    <property type="term" value="F:DNA-(apurinic or apyrimidinic site) endonuclease activity"/>
    <property type="evidence" value="ECO:0007669"/>
    <property type="project" value="TreeGrafter"/>
</dbReference>
<dbReference type="GO" id="GO:0008081">
    <property type="term" value="F:phosphoric diester hydrolase activity"/>
    <property type="evidence" value="ECO:0007669"/>
    <property type="project" value="TreeGrafter"/>
</dbReference>
<dbReference type="GO" id="GO:0008270">
    <property type="term" value="F:zinc ion binding"/>
    <property type="evidence" value="ECO:0007669"/>
    <property type="project" value="UniProtKB-UniRule"/>
</dbReference>
<dbReference type="GO" id="GO:0006284">
    <property type="term" value="P:base-excision repair"/>
    <property type="evidence" value="ECO:0007669"/>
    <property type="project" value="TreeGrafter"/>
</dbReference>
<dbReference type="CDD" id="cd00019">
    <property type="entry name" value="AP2Ec"/>
    <property type="match status" value="1"/>
</dbReference>
<dbReference type="FunFam" id="3.20.20.150:FF:000001">
    <property type="entry name" value="Probable endonuclease 4"/>
    <property type="match status" value="1"/>
</dbReference>
<dbReference type="Gene3D" id="3.20.20.150">
    <property type="entry name" value="Divalent-metal-dependent TIM barrel enzymes"/>
    <property type="match status" value="1"/>
</dbReference>
<dbReference type="HAMAP" id="MF_00152">
    <property type="entry name" value="Nfo"/>
    <property type="match status" value="1"/>
</dbReference>
<dbReference type="InterPro" id="IPR001719">
    <property type="entry name" value="AP_endonuc_2"/>
</dbReference>
<dbReference type="InterPro" id="IPR018246">
    <property type="entry name" value="AP_endonuc_F2_Zn_BS"/>
</dbReference>
<dbReference type="InterPro" id="IPR036237">
    <property type="entry name" value="Xyl_isomerase-like_sf"/>
</dbReference>
<dbReference type="InterPro" id="IPR013022">
    <property type="entry name" value="Xyl_isomerase-like_TIM-brl"/>
</dbReference>
<dbReference type="NCBIfam" id="TIGR00587">
    <property type="entry name" value="nfo"/>
    <property type="match status" value="1"/>
</dbReference>
<dbReference type="NCBIfam" id="NF002199">
    <property type="entry name" value="PRK01060.1-4"/>
    <property type="match status" value="1"/>
</dbReference>
<dbReference type="PANTHER" id="PTHR21445:SF0">
    <property type="entry name" value="APURINIC-APYRIMIDINIC ENDONUCLEASE"/>
    <property type="match status" value="1"/>
</dbReference>
<dbReference type="PANTHER" id="PTHR21445">
    <property type="entry name" value="ENDONUCLEASE IV ENDODEOXYRIBONUCLEASE IV"/>
    <property type="match status" value="1"/>
</dbReference>
<dbReference type="Pfam" id="PF01261">
    <property type="entry name" value="AP_endonuc_2"/>
    <property type="match status" value="1"/>
</dbReference>
<dbReference type="SMART" id="SM00518">
    <property type="entry name" value="AP2Ec"/>
    <property type="match status" value="1"/>
</dbReference>
<dbReference type="SUPFAM" id="SSF51658">
    <property type="entry name" value="Xylose isomerase-like"/>
    <property type="match status" value="1"/>
</dbReference>
<dbReference type="PROSITE" id="PS00729">
    <property type="entry name" value="AP_NUCLEASE_F2_1"/>
    <property type="match status" value="1"/>
</dbReference>
<dbReference type="PROSITE" id="PS00730">
    <property type="entry name" value="AP_NUCLEASE_F2_2"/>
    <property type="match status" value="1"/>
</dbReference>
<dbReference type="PROSITE" id="PS00731">
    <property type="entry name" value="AP_NUCLEASE_F2_3"/>
    <property type="match status" value="1"/>
</dbReference>
<dbReference type="PROSITE" id="PS51432">
    <property type="entry name" value="AP_NUCLEASE_F2_4"/>
    <property type="match status" value="1"/>
</dbReference>
<accession>Q64WY5</accession>
<sequence>MKYIGAHVSASGGVEFAPVNAHEIGANAFALFTKNQRQWVSKPLTEDSIRLFKENCEKFGFAPEYILPHDSYLINLGHPEEEGLTKSRAAFLDEMQRCEQLGLKLLNFHPGSHLNKISVEECLDRIAESINLALEKTKGVTAVIENTAGQGSNLGNEFWQLKYIIDRVEDKSRVGVCLDTCHTFTAGYDFLNDYDDVFGEFGEVVGFEYLRGMHLNDSKKELGSRVDRHDSIGKGLIGFAFFEKLMKDPRFDNMPLILETIDETLWPEEIAWLREQTQ</sequence>
<protein>
    <recommendedName>
        <fullName evidence="1">Probable endonuclease 4</fullName>
        <ecNumber evidence="1">3.1.21.2</ecNumber>
    </recommendedName>
    <alternativeName>
        <fullName evidence="1">Endodeoxyribonuclease IV</fullName>
    </alternativeName>
    <alternativeName>
        <fullName evidence="1">Endonuclease IV</fullName>
    </alternativeName>
</protein>
<name>END4_BACFR</name>
<keyword id="KW-0227">DNA damage</keyword>
<keyword id="KW-0234">DNA repair</keyword>
<keyword id="KW-0255">Endonuclease</keyword>
<keyword id="KW-0378">Hydrolase</keyword>
<keyword id="KW-0479">Metal-binding</keyword>
<keyword id="KW-0540">Nuclease</keyword>
<keyword id="KW-0862">Zinc</keyword>
<comment type="function">
    <text evidence="1">Endonuclease IV plays a role in DNA repair. It cleaves phosphodiester bonds at apurinic or apyrimidinic (AP) sites, generating a 3'-hydroxyl group and a 5'-terminal sugar phosphate.</text>
</comment>
<comment type="catalytic activity">
    <reaction evidence="1">
        <text>Endonucleolytic cleavage to 5'-phosphooligonucleotide end-products.</text>
        <dbReference type="EC" id="3.1.21.2"/>
    </reaction>
</comment>
<comment type="cofactor">
    <cofactor evidence="1">
        <name>Zn(2+)</name>
        <dbReference type="ChEBI" id="CHEBI:29105"/>
    </cofactor>
    <text evidence="1">Binds 3 Zn(2+) ions.</text>
</comment>
<comment type="similarity">
    <text evidence="1">Belongs to the AP endonuclease 2 family.</text>
</comment>